<sequence>MANFPASLLILNGKSADNQPLREAITLLRDEGIQIHVRVTWEKGDAQRYVDEARRLGVETVIAGGGDGTINEVSTALIQIRDGVAPALGLLPLGTANDFATSAGIPEALDKALKLAIAGNAMEIDMARVNDKTCFINMATGGFGTRITTETPEKLKAALGGVSYLIHGLMRMDTLTPDRCEIRGENFHWQGDALVIGIGNGRQAGGGQQLCPTALINDGLLQLRIFTGEELLPALFSTLTQSDDNPNIIDGASAWFDIHAPHEITFNLDGEPLSGQEFHIEVLPGALRCRLPPDCPLLR</sequence>
<proteinExistence type="inferred from homology"/>
<feature type="chain" id="PRO_1000144878" description="Probable lipid kinase YegS">
    <location>
        <begin position="1"/>
        <end position="299"/>
    </location>
</feature>
<feature type="domain" description="DAGKc" evidence="1">
    <location>
        <begin position="2"/>
        <end position="133"/>
    </location>
</feature>
<feature type="active site" description="Proton acceptor" evidence="1">
    <location>
        <position position="271"/>
    </location>
</feature>
<feature type="binding site" evidence="1">
    <location>
        <position position="40"/>
    </location>
    <ligand>
        <name>ATP</name>
        <dbReference type="ChEBI" id="CHEBI:30616"/>
    </ligand>
</feature>
<feature type="binding site" evidence="1">
    <location>
        <begin position="66"/>
        <end position="72"/>
    </location>
    <ligand>
        <name>ATP</name>
        <dbReference type="ChEBI" id="CHEBI:30616"/>
    </ligand>
</feature>
<feature type="binding site" evidence="1">
    <location>
        <position position="95"/>
    </location>
    <ligand>
        <name>ATP</name>
        <dbReference type="ChEBI" id="CHEBI:30616"/>
    </ligand>
</feature>
<feature type="binding site" evidence="1">
    <location>
        <position position="215"/>
    </location>
    <ligand>
        <name>Mg(2+)</name>
        <dbReference type="ChEBI" id="CHEBI:18420"/>
    </ligand>
</feature>
<feature type="binding site" evidence="1">
    <location>
        <position position="218"/>
    </location>
    <ligand>
        <name>Mg(2+)</name>
        <dbReference type="ChEBI" id="CHEBI:18420"/>
    </ligand>
</feature>
<feature type="binding site" evidence="1">
    <location>
        <position position="220"/>
    </location>
    <ligand>
        <name>Mg(2+)</name>
        <dbReference type="ChEBI" id="CHEBI:18420"/>
    </ligand>
</feature>
<dbReference type="EC" id="2.7.1.-" evidence="1"/>
<dbReference type="EMBL" id="CP001127">
    <property type="protein sequence ID" value="ACF89487.1"/>
    <property type="molecule type" value="Genomic_DNA"/>
</dbReference>
<dbReference type="RefSeq" id="WP_001273393.1">
    <property type="nucleotide sequence ID" value="NC_011094.1"/>
</dbReference>
<dbReference type="SMR" id="B4TNJ7"/>
<dbReference type="KEGG" id="sew:SeSA_A2376"/>
<dbReference type="HOGENOM" id="CLU_045532_1_1_6"/>
<dbReference type="Proteomes" id="UP000001865">
    <property type="component" value="Chromosome"/>
</dbReference>
<dbReference type="GO" id="GO:0005737">
    <property type="term" value="C:cytoplasm"/>
    <property type="evidence" value="ECO:0007669"/>
    <property type="project" value="UniProtKB-SubCell"/>
</dbReference>
<dbReference type="GO" id="GO:0005886">
    <property type="term" value="C:plasma membrane"/>
    <property type="evidence" value="ECO:0007669"/>
    <property type="project" value="TreeGrafter"/>
</dbReference>
<dbReference type="GO" id="GO:0005524">
    <property type="term" value="F:ATP binding"/>
    <property type="evidence" value="ECO:0007669"/>
    <property type="project" value="UniProtKB-UniRule"/>
</dbReference>
<dbReference type="GO" id="GO:0001727">
    <property type="term" value="F:lipid kinase activity"/>
    <property type="evidence" value="ECO:0007669"/>
    <property type="project" value="UniProtKB-UniRule"/>
</dbReference>
<dbReference type="GO" id="GO:0000287">
    <property type="term" value="F:magnesium ion binding"/>
    <property type="evidence" value="ECO:0007669"/>
    <property type="project" value="UniProtKB-UniRule"/>
</dbReference>
<dbReference type="GO" id="GO:0008654">
    <property type="term" value="P:phospholipid biosynthetic process"/>
    <property type="evidence" value="ECO:0007669"/>
    <property type="project" value="UniProtKB-UniRule"/>
</dbReference>
<dbReference type="FunFam" id="3.40.50.10330:FF:000008">
    <property type="entry name" value="Probable lipid kinase YegS"/>
    <property type="match status" value="1"/>
</dbReference>
<dbReference type="Gene3D" id="2.60.200.40">
    <property type="match status" value="1"/>
</dbReference>
<dbReference type="Gene3D" id="3.40.50.10330">
    <property type="entry name" value="Probable inorganic polyphosphate/atp-NAD kinase, domain 1"/>
    <property type="match status" value="1"/>
</dbReference>
<dbReference type="HAMAP" id="MF_01377">
    <property type="entry name" value="YegS"/>
    <property type="match status" value="1"/>
</dbReference>
<dbReference type="InterPro" id="IPR017438">
    <property type="entry name" value="ATP-NAD_kinase_N"/>
</dbReference>
<dbReference type="InterPro" id="IPR005218">
    <property type="entry name" value="Diacylglycerol/lipid_kinase"/>
</dbReference>
<dbReference type="InterPro" id="IPR001206">
    <property type="entry name" value="Diacylglycerol_kinase_cat_dom"/>
</dbReference>
<dbReference type="InterPro" id="IPR022433">
    <property type="entry name" value="Lip_kinase_YegS"/>
</dbReference>
<dbReference type="InterPro" id="IPR050187">
    <property type="entry name" value="Lipid_Phosphate_FormReg"/>
</dbReference>
<dbReference type="InterPro" id="IPR016064">
    <property type="entry name" value="NAD/diacylglycerol_kinase_sf"/>
</dbReference>
<dbReference type="InterPro" id="IPR045540">
    <property type="entry name" value="YegS/DAGK_C"/>
</dbReference>
<dbReference type="NCBIfam" id="TIGR03702">
    <property type="entry name" value="lip_kinase_YegS"/>
    <property type="match status" value="1"/>
</dbReference>
<dbReference type="NCBIfam" id="NF009602">
    <property type="entry name" value="PRK13054.1"/>
    <property type="match status" value="1"/>
</dbReference>
<dbReference type="NCBIfam" id="TIGR00147">
    <property type="entry name" value="YegS/Rv2252/BmrU family lipid kinase"/>
    <property type="match status" value="1"/>
</dbReference>
<dbReference type="PANTHER" id="PTHR12358:SF106">
    <property type="entry name" value="LIPID KINASE YEGS"/>
    <property type="match status" value="1"/>
</dbReference>
<dbReference type="PANTHER" id="PTHR12358">
    <property type="entry name" value="SPHINGOSINE KINASE"/>
    <property type="match status" value="1"/>
</dbReference>
<dbReference type="Pfam" id="PF00781">
    <property type="entry name" value="DAGK_cat"/>
    <property type="match status" value="1"/>
</dbReference>
<dbReference type="Pfam" id="PF19279">
    <property type="entry name" value="YegS_C"/>
    <property type="match status" value="1"/>
</dbReference>
<dbReference type="SMART" id="SM00046">
    <property type="entry name" value="DAGKc"/>
    <property type="match status" value="1"/>
</dbReference>
<dbReference type="SUPFAM" id="SSF111331">
    <property type="entry name" value="NAD kinase/diacylglycerol kinase-like"/>
    <property type="match status" value="1"/>
</dbReference>
<dbReference type="PROSITE" id="PS50146">
    <property type="entry name" value="DAGK"/>
    <property type="match status" value="1"/>
</dbReference>
<evidence type="ECO:0000255" key="1">
    <source>
        <dbReference type="HAMAP-Rule" id="MF_01377"/>
    </source>
</evidence>
<gene>
    <name evidence="1" type="primary">yegS</name>
    <name type="ordered locus">SeSA_A2376</name>
</gene>
<protein>
    <recommendedName>
        <fullName evidence="1">Probable lipid kinase YegS</fullName>
        <ecNumber evidence="1">2.7.1.-</ecNumber>
    </recommendedName>
</protein>
<reference key="1">
    <citation type="journal article" date="2011" name="J. Bacteriol.">
        <title>Comparative genomics of 28 Salmonella enterica isolates: evidence for CRISPR-mediated adaptive sublineage evolution.</title>
        <authorList>
            <person name="Fricke W.F."/>
            <person name="Mammel M.K."/>
            <person name="McDermott P.F."/>
            <person name="Tartera C."/>
            <person name="White D.G."/>
            <person name="Leclerc J.E."/>
            <person name="Ravel J."/>
            <person name="Cebula T.A."/>
        </authorList>
    </citation>
    <scope>NUCLEOTIDE SEQUENCE [LARGE SCALE GENOMIC DNA]</scope>
    <source>
        <strain>CVM19633</strain>
    </source>
</reference>
<name>YEGS_SALSV</name>
<organism>
    <name type="scientific">Salmonella schwarzengrund (strain CVM19633)</name>
    <dbReference type="NCBI Taxonomy" id="439843"/>
    <lineage>
        <taxon>Bacteria</taxon>
        <taxon>Pseudomonadati</taxon>
        <taxon>Pseudomonadota</taxon>
        <taxon>Gammaproteobacteria</taxon>
        <taxon>Enterobacterales</taxon>
        <taxon>Enterobacteriaceae</taxon>
        <taxon>Salmonella</taxon>
    </lineage>
</organism>
<accession>B4TNJ7</accession>
<comment type="function">
    <text evidence="1">Probably phosphorylates lipids; the in vivo substrate is unknown.</text>
</comment>
<comment type="cofactor">
    <cofactor evidence="1">
        <name>Mg(2+)</name>
        <dbReference type="ChEBI" id="CHEBI:18420"/>
    </cofactor>
    <cofactor evidence="1">
        <name>Ca(2+)</name>
        <dbReference type="ChEBI" id="CHEBI:29108"/>
    </cofactor>
    <text evidence="1">Binds 1 Mg(2+) ion per subunit. Ca(2+) may be able to substitute.</text>
</comment>
<comment type="subcellular location">
    <subcellularLocation>
        <location evidence="1">Cytoplasm</location>
    </subcellularLocation>
</comment>
<comment type="similarity">
    <text evidence="1">Belongs to the diacylglycerol/lipid kinase family. YegS lipid kinase subfamily.</text>
</comment>
<keyword id="KW-0067">ATP-binding</keyword>
<keyword id="KW-0963">Cytoplasm</keyword>
<keyword id="KW-0418">Kinase</keyword>
<keyword id="KW-0444">Lipid biosynthesis</keyword>
<keyword id="KW-0443">Lipid metabolism</keyword>
<keyword id="KW-0460">Magnesium</keyword>
<keyword id="KW-0479">Metal-binding</keyword>
<keyword id="KW-0547">Nucleotide-binding</keyword>
<keyword id="KW-0594">Phospholipid biosynthesis</keyword>
<keyword id="KW-1208">Phospholipid metabolism</keyword>
<keyword id="KW-0808">Transferase</keyword>